<sequence length="334" mass="36435">MALRWGIVSVGLISSDFTAVLQTLPRSEHQVVAVAARDLSRAKEFAQKHDIPKAYGSYEELAKDPNVEVAYVGTQHPQHKAAVMLCLAAGKAVLCEKPMGVNAAEVREMVTEARSRGLFLMEAIWTRFFPASEALRSVLAQGTLGDLRVARAEFGKNLTHVPRAVDWAQAGGALLDLGIYCVQFISMVFGGQKPEKISVMGRRHETGVDDTVTVLLQYPGEVHGSFTCSITAQLSNTASVSGTKGMAQLLNPCWCPTELVVKGEHKEFLLPPVPKNCNFDNGAGMSYEAKHVRECLRKGLKESPVIPLVESELLADILEEVRRAIGVTFPQDKH</sequence>
<name>DHDH_MACFA</name>
<proteinExistence type="evidence at protein level"/>
<evidence type="ECO:0000250" key="1"/>
<evidence type="ECO:0000269" key="2">
    <source>
    </source>
</evidence>
<evidence type="ECO:0000269" key="3">
    <source>
    </source>
</evidence>
<evidence type="ECO:0000305" key="4"/>
<evidence type="ECO:0007829" key="5">
    <source>
        <dbReference type="PDB" id="3OHS"/>
    </source>
</evidence>
<protein>
    <recommendedName>
        <fullName>Trans-1,2-dihydrobenzene-1,2-diol dehydrogenase</fullName>
        <ecNumber>1.3.1.20</ecNumber>
    </recommendedName>
    <alternativeName>
        <fullName>Cmo2DD</fullName>
    </alternativeName>
    <alternativeName>
        <fullName>D-xylose 1-dehydrogenase</fullName>
    </alternativeName>
    <alternativeName>
        <fullName>D-xylose-NADP dehydrogenase</fullName>
        <ecNumber>1.1.1.179</ecNumber>
    </alternativeName>
    <alternativeName>
        <fullName>Dimeric dihydrodiol dehydrogenase</fullName>
    </alternativeName>
</protein>
<accession>Q9TQS6</accession>
<comment type="catalytic activity">
    <reaction>
        <text>(1R,2R)-1,2-dihydrobenzene-1,2-diol + NADP(+) = catechol + NADPH + H(+)</text>
        <dbReference type="Rhea" id="RHEA:16729"/>
        <dbReference type="ChEBI" id="CHEBI:10702"/>
        <dbReference type="ChEBI" id="CHEBI:15378"/>
        <dbReference type="ChEBI" id="CHEBI:18135"/>
        <dbReference type="ChEBI" id="CHEBI:57783"/>
        <dbReference type="ChEBI" id="CHEBI:58349"/>
        <dbReference type="EC" id="1.3.1.20"/>
    </reaction>
</comment>
<comment type="catalytic activity">
    <reaction>
        <text>D-xylose + NADP(+) = D-xylono-1,5-lactone + NADPH + H(+)</text>
        <dbReference type="Rhea" id="RHEA:22000"/>
        <dbReference type="ChEBI" id="CHEBI:15378"/>
        <dbReference type="ChEBI" id="CHEBI:15867"/>
        <dbReference type="ChEBI" id="CHEBI:53455"/>
        <dbReference type="ChEBI" id="CHEBI:57783"/>
        <dbReference type="ChEBI" id="CHEBI:58349"/>
        <dbReference type="EC" id="1.1.1.179"/>
    </reaction>
</comment>
<comment type="subunit">
    <text evidence="2">Homodimer.</text>
</comment>
<comment type="tissue specificity">
    <text evidence="2">Kidney.</text>
</comment>
<comment type="similarity">
    <text evidence="4">Belongs to the Gfo/Idh/MocA family.</text>
</comment>
<keyword id="KW-0002">3D-structure</keyword>
<keyword id="KW-0903">Direct protein sequencing</keyword>
<keyword id="KW-0521">NADP</keyword>
<keyword id="KW-0560">Oxidoreductase</keyword>
<keyword id="KW-1185">Reference proteome</keyword>
<feature type="chain" id="PRO_0000315362" description="Trans-1,2-dihydrobenzene-1,2-diol dehydrogenase">
    <location>
        <begin position="1"/>
        <end position="334"/>
    </location>
</feature>
<feature type="site" description="May play an important role in coenzyme binding" evidence="1">
    <location>
        <position position="71"/>
    </location>
</feature>
<feature type="site" description="May play an important role in coenzyme binding" evidence="1">
    <location>
        <position position="79"/>
    </location>
</feature>
<feature type="site" description="May play an important role in coenzyme binding" evidence="1">
    <location>
        <position position="97"/>
    </location>
</feature>
<feature type="site" description="May play an important role for the adaptation of the alcohol substrate into the binding site" evidence="1">
    <location>
        <position position="176"/>
    </location>
</feature>
<feature type="site" description="May play an important role in catalytic activity" evidence="1">
    <location>
        <position position="180"/>
    </location>
</feature>
<feature type="mutagenesis site" description="No effect on activity. Reduced activity and exhibits significant temperature sensitivity; when associated with A-202." evidence="3">
    <original>R</original>
    <variation>A</variation>
    <location>
        <position position="148"/>
    </location>
</feature>
<feature type="mutagenesis site" description="No effect on activity. Reduced activity and exhibits significant temperature sensitivity; when associated with A-148." evidence="3">
    <original>R</original>
    <variation>A</variation>
    <location>
        <position position="202"/>
    </location>
</feature>
<feature type="strand" evidence="5">
    <location>
        <begin position="3"/>
        <end position="8"/>
    </location>
</feature>
<feature type="helix" evidence="5">
    <location>
        <begin position="12"/>
        <end position="21"/>
    </location>
</feature>
<feature type="turn" evidence="5">
    <location>
        <begin position="26"/>
        <end position="28"/>
    </location>
</feature>
<feature type="strand" evidence="5">
    <location>
        <begin position="29"/>
        <end position="35"/>
    </location>
</feature>
<feature type="helix" evidence="5">
    <location>
        <begin position="39"/>
        <end position="49"/>
    </location>
</feature>
<feature type="strand" evidence="5">
    <location>
        <begin position="54"/>
        <end position="57"/>
    </location>
</feature>
<feature type="helix" evidence="5">
    <location>
        <begin position="58"/>
        <end position="63"/>
    </location>
</feature>
<feature type="strand" evidence="5">
    <location>
        <begin position="69"/>
        <end position="72"/>
    </location>
</feature>
<feature type="helix" evidence="5">
    <location>
        <begin position="76"/>
        <end position="78"/>
    </location>
</feature>
<feature type="helix" evidence="5">
    <location>
        <begin position="79"/>
        <end position="88"/>
    </location>
</feature>
<feature type="strand" evidence="5">
    <location>
        <begin position="92"/>
        <end position="102"/>
    </location>
</feature>
<feature type="helix" evidence="5">
    <location>
        <begin position="103"/>
        <end position="115"/>
    </location>
</feature>
<feature type="strand" evidence="5">
    <location>
        <begin position="120"/>
        <end position="123"/>
    </location>
</feature>
<feature type="helix" evidence="5">
    <location>
        <begin position="125"/>
        <end position="128"/>
    </location>
</feature>
<feature type="helix" evidence="5">
    <location>
        <begin position="130"/>
        <end position="141"/>
    </location>
</feature>
<feature type="turn" evidence="5">
    <location>
        <begin position="142"/>
        <end position="144"/>
    </location>
</feature>
<feature type="strand" evidence="5">
    <location>
        <begin position="146"/>
        <end position="155"/>
    </location>
</feature>
<feature type="helix" evidence="5">
    <location>
        <begin position="162"/>
        <end position="165"/>
    </location>
</feature>
<feature type="turn" evidence="5">
    <location>
        <begin position="167"/>
        <end position="170"/>
    </location>
</feature>
<feature type="helix" evidence="5">
    <location>
        <begin position="173"/>
        <end position="176"/>
    </location>
</feature>
<feature type="helix" evidence="5">
    <location>
        <begin position="178"/>
        <end position="188"/>
    </location>
</feature>
<feature type="turn" evidence="5">
    <location>
        <begin position="189"/>
        <end position="191"/>
    </location>
</feature>
<feature type="strand" evidence="5">
    <location>
        <begin position="195"/>
        <end position="203"/>
    </location>
</feature>
<feature type="strand" evidence="5">
    <location>
        <begin position="207"/>
        <end position="218"/>
    </location>
</feature>
<feature type="turn" evidence="5">
    <location>
        <begin position="219"/>
        <end position="221"/>
    </location>
</feature>
<feature type="strand" evidence="5">
    <location>
        <begin position="222"/>
        <end position="232"/>
    </location>
</feature>
<feature type="strand" evidence="5">
    <location>
        <begin position="238"/>
        <end position="242"/>
    </location>
</feature>
<feature type="strand" evidence="5">
    <location>
        <begin position="245"/>
        <end position="249"/>
    </location>
</feature>
<feature type="strand" evidence="5">
    <location>
        <begin position="258"/>
        <end position="261"/>
    </location>
</feature>
<feature type="strand" evidence="5">
    <location>
        <begin position="264"/>
        <end position="267"/>
    </location>
</feature>
<feature type="helix" evidence="5">
    <location>
        <begin position="282"/>
        <end position="285"/>
    </location>
</feature>
<feature type="helix" evidence="5">
    <location>
        <begin position="286"/>
        <end position="297"/>
    </location>
</feature>
<feature type="strand" evidence="5">
    <location>
        <begin position="304"/>
        <end position="306"/>
    </location>
</feature>
<feature type="helix" evidence="5">
    <location>
        <begin position="308"/>
        <end position="324"/>
    </location>
</feature>
<organism>
    <name type="scientific">Macaca fascicularis</name>
    <name type="common">Crab-eating macaque</name>
    <name type="synonym">Cynomolgus monkey</name>
    <dbReference type="NCBI Taxonomy" id="9541"/>
    <lineage>
        <taxon>Eukaryota</taxon>
        <taxon>Metazoa</taxon>
        <taxon>Chordata</taxon>
        <taxon>Craniata</taxon>
        <taxon>Vertebrata</taxon>
        <taxon>Euteleostomi</taxon>
        <taxon>Mammalia</taxon>
        <taxon>Eutheria</taxon>
        <taxon>Euarchontoglires</taxon>
        <taxon>Primates</taxon>
        <taxon>Haplorrhini</taxon>
        <taxon>Catarrhini</taxon>
        <taxon>Cercopithecidae</taxon>
        <taxon>Cercopithecinae</taxon>
        <taxon>Macaca</taxon>
    </lineage>
</organism>
<reference key="1">
    <citation type="journal article" date="1999" name="Biochem. J.">
        <title>Cloning and sequencing of the cDNA species for mammalian dimeric dihydrodiol dehydrogenases.</title>
        <authorList>
            <person name="Arimitsu E."/>
            <person name="Aoki S."/>
            <person name="Ishikura S."/>
            <person name="Nakanishi K."/>
            <person name="Matsuura K."/>
            <person name="Hara A."/>
        </authorList>
    </citation>
    <scope>NUCLEOTIDE SEQUENCE [MRNA]</scope>
    <scope>PROTEIN SEQUENCE OF 54-73; 92-97; 245-253; 276-280 AND 291-298</scope>
    <scope>SUBUNIT</scope>
    <scope>TISSUE SPECIFICITY</scope>
    <source>
        <tissue>Kidney</tissue>
    </source>
</reference>
<reference key="2">
    <citation type="journal article" date="2008" name="Proteins">
        <title>Structures of dimeric dihydrodiol dehydrogenase apoenzyme and inhibitor complex: probing the subunit interface with site-directed mutagenesis.</title>
        <authorList>
            <person name="Carbone V."/>
            <person name="Endo S."/>
            <person name="Sumii R."/>
            <person name="Chung R.P.-T."/>
            <person name="Matsunaga T."/>
            <person name="Hara A."/>
            <person name="El-Kabbani O."/>
        </authorList>
    </citation>
    <scope>X-RAY CRYSTALLOGRAPHY (2.0 ANGSTROMS)</scope>
    <scope>MUTAGENESIS OF ARG-148 AND ARG-202</scope>
</reference>
<dbReference type="EC" id="1.3.1.20"/>
<dbReference type="EC" id="1.1.1.179"/>
<dbReference type="EMBL" id="AB021932">
    <property type="protein sequence ID" value="BAA83489.1"/>
    <property type="molecule type" value="mRNA"/>
</dbReference>
<dbReference type="RefSeq" id="NP_001271017.1">
    <property type="nucleotide sequence ID" value="NM_001284088.1"/>
</dbReference>
<dbReference type="PDB" id="2O48">
    <property type="method" value="X-ray"/>
    <property type="resolution" value="2.59 A"/>
    <property type="chains" value="X=1-334"/>
</dbReference>
<dbReference type="PDB" id="2O4U">
    <property type="method" value="X-ray"/>
    <property type="resolution" value="2.00 A"/>
    <property type="chains" value="X=1-334"/>
</dbReference>
<dbReference type="PDB" id="2POQ">
    <property type="method" value="X-ray"/>
    <property type="resolution" value="2.59 A"/>
    <property type="chains" value="X=1-334"/>
</dbReference>
<dbReference type="PDB" id="3OHS">
    <property type="method" value="X-ray"/>
    <property type="resolution" value="1.90 A"/>
    <property type="chains" value="X=1-334"/>
</dbReference>
<dbReference type="PDBsum" id="2O48"/>
<dbReference type="PDBsum" id="2O4U"/>
<dbReference type="PDBsum" id="2POQ"/>
<dbReference type="PDBsum" id="3OHS"/>
<dbReference type="SMR" id="Q9TQS6"/>
<dbReference type="STRING" id="9541.ENSMFAP00000031243"/>
<dbReference type="VEuPathDB" id="HostDB:ENSMFAG00000036688"/>
<dbReference type="eggNOG" id="KOG2741">
    <property type="taxonomic scope" value="Eukaryota"/>
</dbReference>
<dbReference type="OMA" id="AHETGKY"/>
<dbReference type="BRENDA" id="1.1.1.179">
    <property type="organism ID" value="1793"/>
</dbReference>
<dbReference type="BRENDA" id="1.3.1.20">
    <property type="organism ID" value="1793"/>
</dbReference>
<dbReference type="EvolutionaryTrace" id="Q9TQS6"/>
<dbReference type="PRO" id="PR:Q9TQS6"/>
<dbReference type="Proteomes" id="UP000233100">
    <property type="component" value="Chromosome 19"/>
</dbReference>
<dbReference type="GO" id="GO:0047837">
    <property type="term" value="F:D-xylose 1-dehydrogenase (NADP+) activity"/>
    <property type="evidence" value="ECO:0007669"/>
    <property type="project" value="UniProtKB-EC"/>
</dbReference>
<dbReference type="GO" id="GO:0000166">
    <property type="term" value="F:nucleotide binding"/>
    <property type="evidence" value="ECO:0007669"/>
    <property type="project" value="InterPro"/>
</dbReference>
<dbReference type="GO" id="GO:0047115">
    <property type="term" value="F:trans-1,2-dihydrobenzene-1,2-diol dehydrogenase activity"/>
    <property type="evidence" value="ECO:0007669"/>
    <property type="project" value="UniProtKB-EC"/>
</dbReference>
<dbReference type="GO" id="GO:0042843">
    <property type="term" value="P:D-xylose catabolic process"/>
    <property type="evidence" value="ECO:0007669"/>
    <property type="project" value="TreeGrafter"/>
</dbReference>
<dbReference type="FunFam" id="3.30.360.10:FF:000031">
    <property type="entry name" value="Trans-1,2-dihydrobenzene-1,2-diol dehydrogenase"/>
    <property type="match status" value="1"/>
</dbReference>
<dbReference type="FunFam" id="3.40.50.720:FF:000269">
    <property type="entry name" value="Trans-1,2-dihydrobenzene-1,2-diol dehydrogenase"/>
    <property type="match status" value="1"/>
</dbReference>
<dbReference type="Gene3D" id="3.30.360.10">
    <property type="entry name" value="Dihydrodipicolinate Reductase, domain 2"/>
    <property type="match status" value="1"/>
</dbReference>
<dbReference type="Gene3D" id="3.40.50.720">
    <property type="entry name" value="NAD(P)-binding Rossmann-like Domain"/>
    <property type="match status" value="1"/>
</dbReference>
<dbReference type="InterPro" id="IPR000683">
    <property type="entry name" value="Gfo/Idh/MocA-like_OxRdtase_N"/>
</dbReference>
<dbReference type="InterPro" id="IPR050984">
    <property type="entry name" value="Gfo/Idh/MocA_domain"/>
</dbReference>
<dbReference type="InterPro" id="IPR055170">
    <property type="entry name" value="GFO_IDH_MocA-like_dom"/>
</dbReference>
<dbReference type="InterPro" id="IPR036291">
    <property type="entry name" value="NAD(P)-bd_dom_sf"/>
</dbReference>
<dbReference type="PANTHER" id="PTHR22604">
    <property type="entry name" value="OXIDOREDUCTASES"/>
    <property type="match status" value="1"/>
</dbReference>
<dbReference type="PANTHER" id="PTHR22604:SF105">
    <property type="entry name" value="TRANS-1,2-DIHYDROBENZENE-1,2-DIOL DEHYDROGENASE"/>
    <property type="match status" value="1"/>
</dbReference>
<dbReference type="Pfam" id="PF01408">
    <property type="entry name" value="GFO_IDH_MocA"/>
    <property type="match status" value="1"/>
</dbReference>
<dbReference type="Pfam" id="PF22725">
    <property type="entry name" value="GFO_IDH_MocA_C3"/>
    <property type="match status" value="1"/>
</dbReference>
<dbReference type="SUPFAM" id="SSF55347">
    <property type="entry name" value="Glyceraldehyde-3-phosphate dehydrogenase-like, C-terminal domain"/>
    <property type="match status" value="1"/>
</dbReference>
<dbReference type="SUPFAM" id="SSF51735">
    <property type="entry name" value="NAD(P)-binding Rossmann-fold domains"/>
    <property type="match status" value="1"/>
</dbReference>
<gene>
    <name type="primary">DHDH</name>
    <name type="synonym">2DD</name>
</gene>